<sequence>MYLSLRLVSLALCIAPLASAGNNSTPLVQACTGYSFPRVACMYRYASKMPLDFYRKASVDISNVDTYSSTEVANDDSFQQVGKATFLVWDQQRGSEILGSDPAYDIVFTISTGGHEAPVYVPDTNELWFSELGKGELHQQVISLDGDSPTISEVLTDPPLYAPSGARYRNGKIYFSAGGGNSTLEGGPYHPGIYSVDPKTRKSTIEVNNYFGWYFNQVSMPTAHTRGGSPLSHFCTLVDPRLVAHGLTFQHRPTTWILTNTVASGLVILVSSWTRDLTLVHTDAAIVLARNHGTSTVAPQVQASVYRYDPETGAVNIVDDTLHCPNGVAFSPDYKTLYLTDTDAGVPMIDPRVPLSEVPSLQYNSTNRRTVYAFDVSEDGSYLKNRRPIYTAKDFVPDGLKVASNGYVITGAGKGVDILDTTGTPLLSIQTNFTAVNMVFGGKNLDELWIVGHGAVARARLNLTGPALE</sequence>
<accession>Q2TXF4</accession>
<name>ORYH_ASPOR</name>
<protein>
    <recommendedName>
        <fullName evidence="3">Lactonohydrolase oryH</fullName>
        <ecNumber evidence="5">3.1.1.-</ecNumber>
    </recommendedName>
    <alternativeName>
        <fullName evidence="3">Oryzines biosynthesis cluster protein H</fullName>
    </alternativeName>
</protein>
<evidence type="ECO:0000255" key="1"/>
<evidence type="ECO:0000269" key="2">
    <source>
    </source>
</evidence>
<evidence type="ECO:0000303" key="3">
    <source>
    </source>
</evidence>
<evidence type="ECO:0000305" key="4"/>
<evidence type="ECO:0000305" key="5">
    <source>
    </source>
</evidence>
<proteinExistence type="inferred from homology"/>
<feature type="signal peptide" evidence="1">
    <location>
        <begin position="1"/>
        <end position="20"/>
    </location>
</feature>
<feature type="chain" id="PRO_5004216808" description="Lactonohydrolase oryH" evidence="1">
    <location>
        <begin position="21"/>
        <end position="469"/>
    </location>
</feature>
<comment type="function">
    <text evidence="2 5">Lactonohydrolase; part of the gene cluster that mediates the biosynthesis of oryzines, natural products with an unusual maleidride backbone (PubMed:30104550). The two subunits of the fungal fatty acid synthase oryfasA and oryfasB probably form octenoic acid (Probable). This fatty acid is most likely activated by the acyl-CoA ligase oryP to give octenyl-CoA before the citrate synthase-like protein oryE catalyzes condensation with oxaloacetate to form tricarboxylic acid (Probable). The next steps of the pathways are conjectural, but a favorite possible route has been proposed, beginning with decarboxylation and concomitant dehydration by the decarboxylase oryM, followed by tautomerization, which may lead to the production of a diene intermediate (Probable). Reduction of this diene intermediate could give the known metabolite piliformic acid (Probable). On the pathway to oryzine B and oryzine A, however, hydroxylation of the diene by the alpha-ketoglutarate-dependent dioxygenase oryG and lactonisation by the lactonohydrolases oryH or oryL could give oryzine B directly (Probable). Finally, enoyl reduction by the dehydrogenase oryD would then convert oryzine B into oryzine A (Probable).</text>
</comment>
<comment type="pathway">
    <text evidence="5">Secondary metabolite biosynthesis.</text>
</comment>
<comment type="similarity">
    <text evidence="4">Belongs to the SMP-30/CGR1 family.</text>
</comment>
<reference key="1">
    <citation type="journal article" date="2005" name="Nature">
        <title>Genome sequencing and analysis of Aspergillus oryzae.</title>
        <authorList>
            <person name="Machida M."/>
            <person name="Asai K."/>
            <person name="Sano M."/>
            <person name="Tanaka T."/>
            <person name="Kumagai T."/>
            <person name="Terai G."/>
            <person name="Kusumoto K."/>
            <person name="Arima T."/>
            <person name="Akita O."/>
            <person name="Kashiwagi Y."/>
            <person name="Abe K."/>
            <person name="Gomi K."/>
            <person name="Horiuchi H."/>
            <person name="Kitamoto K."/>
            <person name="Kobayashi T."/>
            <person name="Takeuchi M."/>
            <person name="Denning D.W."/>
            <person name="Galagan J.E."/>
            <person name="Nierman W.C."/>
            <person name="Yu J."/>
            <person name="Archer D.B."/>
            <person name="Bennett J.W."/>
            <person name="Bhatnagar D."/>
            <person name="Cleveland T.E."/>
            <person name="Fedorova N.D."/>
            <person name="Gotoh O."/>
            <person name="Horikawa H."/>
            <person name="Hosoyama A."/>
            <person name="Ichinomiya M."/>
            <person name="Igarashi R."/>
            <person name="Iwashita K."/>
            <person name="Juvvadi P.R."/>
            <person name="Kato M."/>
            <person name="Kato Y."/>
            <person name="Kin T."/>
            <person name="Kokubun A."/>
            <person name="Maeda H."/>
            <person name="Maeyama N."/>
            <person name="Maruyama J."/>
            <person name="Nagasaki H."/>
            <person name="Nakajima T."/>
            <person name="Oda K."/>
            <person name="Okada K."/>
            <person name="Paulsen I."/>
            <person name="Sakamoto K."/>
            <person name="Sawano T."/>
            <person name="Takahashi M."/>
            <person name="Takase K."/>
            <person name="Terabayashi Y."/>
            <person name="Wortman J.R."/>
            <person name="Yamada O."/>
            <person name="Yamagata Y."/>
            <person name="Anazawa H."/>
            <person name="Hata Y."/>
            <person name="Koide Y."/>
            <person name="Komori T."/>
            <person name="Koyama Y."/>
            <person name="Minetoki T."/>
            <person name="Suharnan S."/>
            <person name="Tanaka A."/>
            <person name="Isono K."/>
            <person name="Kuhara S."/>
            <person name="Ogasawara N."/>
            <person name="Kikuchi H."/>
        </authorList>
    </citation>
    <scope>NUCLEOTIDE SEQUENCE [LARGE SCALE GENOMIC DNA]</scope>
    <source>
        <strain>ATCC 42149 / RIB 40</strain>
    </source>
</reference>
<reference key="2">
    <citation type="journal article" date="2018" name="J. Fungi">
        <title>Oryzines A &amp; B, maleidride congeners from Aspergillus oryzae and their putative biosynthesis.</title>
        <authorList>
            <person name="Wasil Z."/>
            <person name="Kuhnert E."/>
            <person name="Simpson T.J."/>
            <person name="Cox R.J."/>
        </authorList>
    </citation>
    <scope>FUNCTION</scope>
    <scope>PATHWAY</scope>
</reference>
<keyword id="KW-0378">Hydrolase</keyword>
<keyword id="KW-1185">Reference proteome</keyword>
<keyword id="KW-0732">Signal</keyword>
<dbReference type="EC" id="3.1.1.-" evidence="5"/>
<dbReference type="EMBL" id="BA000056">
    <property type="protein sequence ID" value="BAE66069.1"/>
    <property type="molecule type" value="Genomic_DNA"/>
</dbReference>
<dbReference type="SMR" id="Q2TXF4"/>
<dbReference type="STRING" id="510516.Q2TXF4"/>
<dbReference type="EnsemblFungi" id="BAE66069">
    <property type="protein sequence ID" value="BAE66069"/>
    <property type="gene ID" value="AO090010000167"/>
</dbReference>
<dbReference type="HOGENOM" id="CLU_036110_1_1_1"/>
<dbReference type="OMA" id="WIVGHGA"/>
<dbReference type="Proteomes" id="UP000006564">
    <property type="component" value="Chromosome 8"/>
</dbReference>
<dbReference type="GO" id="GO:0016787">
    <property type="term" value="F:hydrolase activity"/>
    <property type="evidence" value="ECO:0007669"/>
    <property type="project" value="UniProtKB-KW"/>
</dbReference>
<dbReference type="Gene3D" id="2.120.10.30">
    <property type="entry name" value="TolB, C-terminal domain"/>
    <property type="match status" value="1"/>
</dbReference>
<dbReference type="InterPro" id="IPR011042">
    <property type="entry name" value="6-blade_b-propeller_TolB-like"/>
</dbReference>
<dbReference type="InterPro" id="IPR052988">
    <property type="entry name" value="Oryzine_lactonohydrolase"/>
</dbReference>
<dbReference type="InterPro" id="IPR013658">
    <property type="entry name" value="SGL"/>
</dbReference>
<dbReference type="PANTHER" id="PTHR47064">
    <property type="entry name" value="PUTATIVE (AFU_ORTHOLOGUE AFUA_1G08990)-RELATED"/>
    <property type="match status" value="1"/>
</dbReference>
<dbReference type="PANTHER" id="PTHR47064:SF2">
    <property type="entry name" value="SMP-30_GLUCONOLACTONASE_LRE-LIKE REGION DOMAIN-CONTAINING PROTEIN-RELATED"/>
    <property type="match status" value="1"/>
</dbReference>
<dbReference type="Pfam" id="PF08450">
    <property type="entry name" value="SGL"/>
    <property type="match status" value="2"/>
</dbReference>
<dbReference type="SUPFAM" id="SSF63829">
    <property type="entry name" value="Calcium-dependent phosphotriesterase"/>
    <property type="match status" value="1"/>
</dbReference>
<organism>
    <name type="scientific">Aspergillus oryzae (strain ATCC 42149 / RIB 40)</name>
    <name type="common">Yellow koji mold</name>
    <dbReference type="NCBI Taxonomy" id="510516"/>
    <lineage>
        <taxon>Eukaryota</taxon>
        <taxon>Fungi</taxon>
        <taxon>Dikarya</taxon>
        <taxon>Ascomycota</taxon>
        <taxon>Pezizomycotina</taxon>
        <taxon>Eurotiomycetes</taxon>
        <taxon>Eurotiomycetidae</taxon>
        <taxon>Eurotiales</taxon>
        <taxon>Aspergillaceae</taxon>
        <taxon>Aspergillus</taxon>
        <taxon>Aspergillus subgen. Circumdati</taxon>
    </lineage>
</organism>
<gene>
    <name evidence="3" type="primary">oryH</name>
    <name type="ORF">AO090010000167</name>
</gene>